<sequence length="188" mass="21435">MLVSNVYAQTSEALRERVENALEHADRVFPPFDFSHFCSHFFWLVISFGFFYFFIARVIVPRIGCTIEIRRDRIASDLDRAMRLKQEADTVVEIYERKLAEARLQAYAIAQKTSNEIKEKTKLERKEIETSLDKKLADAEGQIAKIRNKAVQNIGSIAEEVVPEIVKKLIGVEVSKESVSLAVKAADN</sequence>
<keyword id="KW-0066">ATP synthesis</keyword>
<keyword id="KW-0997">Cell inner membrane</keyword>
<keyword id="KW-1003">Cell membrane</keyword>
<keyword id="KW-0138">CF(0)</keyword>
<keyword id="KW-0375">Hydrogen ion transport</keyword>
<keyword id="KW-0406">Ion transport</keyword>
<keyword id="KW-0472">Membrane</keyword>
<keyword id="KW-0812">Transmembrane</keyword>
<keyword id="KW-1133">Transmembrane helix</keyword>
<keyword id="KW-0813">Transport</keyword>
<feature type="chain" id="PRO_0000369000" description="ATP synthase subunit b 2">
    <location>
        <begin position="1"/>
        <end position="188"/>
    </location>
</feature>
<feature type="transmembrane region" description="Helical" evidence="2">
    <location>
        <begin position="41"/>
        <end position="61"/>
    </location>
</feature>
<dbReference type="EMBL" id="CP000524">
    <property type="protein sequence ID" value="ABM45323.1"/>
    <property type="status" value="ALT_INIT"/>
    <property type="molecule type" value="Genomic_DNA"/>
</dbReference>
<dbReference type="RefSeq" id="WP_005766367.1">
    <property type="nucleotide sequence ID" value="NC_008783.1"/>
</dbReference>
<dbReference type="SMR" id="A1URU4"/>
<dbReference type="STRING" id="360095.BARBAKC583_0378"/>
<dbReference type="GeneID" id="4684951"/>
<dbReference type="KEGG" id="bbk:BARBAKC583_0378"/>
<dbReference type="PATRIC" id="fig|360095.6.peg.361"/>
<dbReference type="eggNOG" id="COG0711">
    <property type="taxonomic scope" value="Bacteria"/>
</dbReference>
<dbReference type="HOGENOM" id="CLU_079215_1_2_5"/>
<dbReference type="OrthoDB" id="9805716at2"/>
<dbReference type="Proteomes" id="UP000000643">
    <property type="component" value="Chromosome"/>
</dbReference>
<dbReference type="GO" id="GO:0005886">
    <property type="term" value="C:plasma membrane"/>
    <property type="evidence" value="ECO:0007669"/>
    <property type="project" value="UniProtKB-SubCell"/>
</dbReference>
<dbReference type="GO" id="GO:0045259">
    <property type="term" value="C:proton-transporting ATP synthase complex"/>
    <property type="evidence" value="ECO:0007669"/>
    <property type="project" value="UniProtKB-KW"/>
</dbReference>
<dbReference type="GO" id="GO:0046933">
    <property type="term" value="F:proton-transporting ATP synthase activity, rotational mechanism"/>
    <property type="evidence" value="ECO:0007669"/>
    <property type="project" value="UniProtKB-UniRule"/>
</dbReference>
<dbReference type="GO" id="GO:0046961">
    <property type="term" value="F:proton-transporting ATPase activity, rotational mechanism"/>
    <property type="evidence" value="ECO:0007669"/>
    <property type="project" value="TreeGrafter"/>
</dbReference>
<dbReference type="CDD" id="cd06503">
    <property type="entry name" value="ATP-synt_Fo_b"/>
    <property type="match status" value="1"/>
</dbReference>
<dbReference type="HAMAP" id="MF_01398">
    <property type="entry name" value="ATP_synth_b_bprime"/>
    <property type="match status" value="1"/>
</dbReference>
<dbReference type="InterPro" id="IPR002146">
    <property type="entry name" value="ATP_synth_b/b'su_bac/chlpt"/>
</dbReference>
<dbReference type="InterPro" id="IPR050059">
    <property type="entry name" value="ATP_synthase_B_chain"/>
</dbReference>
<dbReference type="NCBIfam" id="NF006612">
    <property type="entry name" value="PRK09174.1"/>
    <property type="match status" value="1"/>
</dbReference>
<dbReference type="PANTHER" id="PTHR33445:SF1">
    <property type="entry name" value="ATP SYNTHASE SUBUNIT B"/>
    <property type="match status" value="1"/>
</dbReference>
<dbReference type="PANTHER" id="PTHR33445">
    <property type="entry name" value="ATP SYNTHASE SUBUNIT B', CHLOROPLASTIC"/>
    <property type="match status" value="1"/>
</dbReference>
<dbReference type="Pfam" id="PF00430">
    <property type="entry name" value="ATP-synt_B"/>
    <property type="match status" value="1"/>
</dbReference>
<proteinExistence type="inferred from homology"/>
<name>ATPF2_BARBK</name>
<organism>
    <name type="scientific">Bartonella bacilliformis (strain ATCC 35685 / KC583 / Herrer 020/F12,63)</name>
    <dbReference type="NCBI Taxonomy" id="360095"/>
    <lineage>
        <taxon>Bacteria</taxon>
        <taxon>Pseudomonadati</taxon>
        <taxon>Pseudomonadota</taxon>
        <taxon>Alphaproteobacteria</taxon>
        <taxon>Hyphomicrobiales</taxon>
        <taxon>Bartonellaceae</taxon>
        <taxon>Bartonella</taxon>
    </lineage>
</organism>
<comment type="function">
    <text evidence="1">F(1)F(0) ATP synthase produces ATP from ADP in the presence of a proton or sodium gradient. F-type ATPases consist of two structural domains, F(1) containing the extramembraneous catalytic core and F(0) containing the membrane proton channel, linked together by a central stalk and a peripheral stalk. During catalysis, ATP synthesis in the catalytic domain of F(1) is coupled via a rotary mechanism of the central stalk subunits to proton translocation (By similarity).</text>
</comment>
<comment type="function">
    <text evidence="1">Component of the F(0) channel, it forms part of the peripheral stalk, linking F(1) to F(0). The b'-subunit is a diverged and duplicated form of b found in plants and photosynthetic bacteria (By similarity).</text>
</comment>
<comment type="subunit">
    <text evidence="1">F-type ATPases have 2 components, F(1) - the catalytic core - and F(0) - the membrane proton channel. F(1) has five subunits: alpha(3), beta(3), gamma(1), delta(1), epsilon(1). F(0) has three main subunits: a(1), b(2) and c(10-14). The alpha and beta chains form an alternating ring which encloses part of the gamma chain. F(1) is attached to F(0) by a central stalk formed by the gamma and epsilon chains, while a peripheral stalk is formed by the delta and b chains (By similarity).</text>
</comment>
<comment type="subcellular location">
    <subcellularLocation>
        <location evidence="1">Cell inner membrane</location>
        <topology evidence="1">Single-pass membrane protein</topology>
    </subcellularLocation>
</comment>
<comment type="similarity">
    <text evidence="3">Belongs to the ATPase B chain family.</text>
</comment>
<comment type="sequence caution" evidence="3">
    <conflict type="erroneous initiation">
        <sequence resource="EMBL-CDS" id="ABM45323"/>
    </conflict>
    <text>Truncated N-terminus.</text>
</comment>
<reference key="1">
    <citation type="submission" date="2006-12" db="EMBL/GenBank/DDBJ databases">
        <authorList>
            <person name="Hendrix L."/>
            <person name="Mohamoud Y."/>
            <person name="Radune D."/>
            <person name="Shvartsbeyn A."/>
            <person name="Daugherty S."/>
            <person name="Dodson R."/>
            <person name="Durkin A.S."/>
            <person name="Harkins D."/>
            <person name="Huot H."/>
            <person name="Kothari S.P."/>
            <person name="Madupu R."/>
            <person name="Li J."/>
            <person name="Nelson W.C."/>
            <person name="Shrivastava S."/>
            <person name="Giglio M.G."/>
            <person name="Haft D."/>
            <person name="Selengut J."/>
            <person name="Fraser-Ligget C."/>
            <person name="Seshadri R."/>
        </authorList>
    </citation>
    <scope>NUCLEOTIDE SEQUENCE [LARGE SCALE GENOMIC DNA]</scope>
    <source>
        <strain>ATCC 35685 / KC583 / Herrer 020/F12,63</strain>
    </source>
</reference>
<protein>
    <recommendedName>
        <fullName>ATP synthase subunit b 2</fullName>
    </recommendedName>
    <alternativeName>
        <fullName>ATP synthase F(0) sector subunit b 2</fullName>
    </alternativeName>
    <alternativeName>
        <fullName>ATPase subunit I 2</fullName>
    </alternativeName>
    <alternativeName>
        <fullName>F-type ATPase subunit b 2</fullName>
        <shortName>F-ATPase subunit b 2</shortName>
    </alternativeName>
</protein>
<evidence type="ECO:0000250" key="1"/>
<evidence type="ECO:0000255" key="2"/>
<evidence type="ECO:0000305" key="3"/>
<accession>A1URU4</accession>
<gene>
    <name type="primary">atpF2</name>
    <name type="synonym">atpG</name>
    <name type="ordered locus">BARBAKC583_0378</name>
</gene>